<evidence type="ECO:0000269" key="1">
    <source>
    </source>
</evidence>
<evidence type="ECO:0000269" key="2">
    <source>
    </source>
</evidence>
<evidence type="ECO:0000269" key="3">
    <source>
    </source>
</evidence>
<evidence type="ECO:0000269" key="4">
    <source>
    </source>
</evidence>
<evidence type="ECO:0000303" key="5">
    <source>
    </source>
</evidence>
<evidence type="ECO:0000303" key="6">
    <source>
    </source>
</evidence>
<evidence type="ECO:0000305" key="7"/>
<evidence type="ECO:0000305" key="8">
    <source>
    </source>
</evidence>
<evidence type="ECO:0000305" key="9">
    <source>
    </source>
</evidence>
<evidence type="ECO:0007829" key="10">
    <source>
        <dbReference type="PDB" id="3U49"/>
    </source>
</evidence>
<evidence type="ECO:0007829" key="11">
    <source>
        <dbReference type="PDB" id="3U4C"/>
    </source>
</evidence>
<reference key="1">
    <citation type="journal article" date="1993" name="Mol. Microbiol.">
        <title>Bacillus subtilis genome project: cloning and sequencing of the 97 kb region from 325 degrees to 333 degrees.</title>
        <authorList>
            <person name="Glaser P."/>
            <person name="Kunst F."/>
            <person name="Arnaud M."/>
            <person name="Coudart M.P."/>
            <person name="Gonzales W."/>
            <person name="Hullo M.-F."/>
            <person name="Ionescu M."/>
            <person name="Lubochinsky B."/>
            <person name="Marcelino L."/>
            <person name="Moszer I."/>
            <person name="Presecan E."/>
            <person name="Santana M."/>
            <person name="Schneider E."/>
            <person name="Schweizer J."/>
            <person name="Vertes A."/>
            <person name="Rapoport G."/>
            <person name="Danchin A."/>
        </authorList>
    </citation>
    <scope>NUCLEOTIDE SEQUENCE [GENOMIC DNA]</scope>
    <source>
        <strain>168</strain>
    </source>
</reference>
<reference key="2">
    <citation type="journal article" date="1997" name="Nature">
        <title>The complete genome sequence of the Gram-positive bacterium Bacillus subtilis.</title>
        <authorList>
            <person name="Kunst F."/>
            <person name="Ogasawara N."/>
            <person name="Moszer I."/>
            <person name="Albertini A.M."/>
            <person name="Alloni G."/>
            <person name="Azevedo V."/>
            <person name="Bertero M.G."/>
            <person name="Bessieres P."/>
            <person name="Bolotin A."/>
            <person name="Borchert S."/>
            <person name="Borriss R."/>
            <person name="Boursier L."/>
            <person name="Brans A."/>
            <person name="Braun M."/>
            <person name="Brignell S.C."/>
            <person name="Bron S."/>
            <person name="Brouillet S."/>
            <person name="Bruschi C.V."/>
            <person name="Caldwell B."/>
            <person name="Capuano V."/>
            <person name="Carter N.M."/>
            <person name="Choi S.-K."/>
            <person name="Codani J.-J."/>
            <person name="Connerton I.F."/>
            <person name="Cummings N.J."/>
            <person name="Daniel R.A."/>
            <person name="Denizot F."/>
            <person name="Devine K.M."/>
            <person name="Duesterhoeft A."/>
            <person name="Ehrlich S.D."/>
            <person name="Emmerson P.T."/>
            <person name="Entian K.-D."/>
            <person name="Errington J."/>
            <person name="Fabret C."/>
            <person name="Ferrari E."/>
            <person name="Foulger D."/>
            <person name="Fritz C."/>
            <person name="Fujita M."/>
            <person name="Fujita Y."/>
            <person name="Fuma S."/>
            <person name="Galizzi A."/>
            <person name="Galleron N."/>
            <person name="Ghim S.-Y."/>
            <person name="Glaser P."/>
            <person name="Goffeau A."/>
            <person name="Golightly E.J."/>
            <person name="Grandi G."/>
            <person name="Guiseppi G."/>
            <person name="Guy B.J."/>
            <person name="Haga K."/>
            <person name="Haiech J."/>
            <person name="Harwood C.R."/>
            <person name="Henaut A."/>
            <person name="Hilbert H."/>
            <person name="Holsappel S."/>
            <person name="Hosono S."/>
            <person name="Hullo M.-F."/>
            <person name="Itaya M."/>
            <person name="Jones L.-M."/>
            <person name="Joris B."/>
            <person name="Karamata D."/>
            <person name="Kasahara Y."/>
            <person name="Klaerr-Blanchard M."/>
            <person name="Klein C."/>
            <person name="Kobayashi Y."/>
            <person name="Koetter P."/>
            <person name="Koningstein G."/>
            <person name="Krogh S."/>
            <person name="Kumano M."/>
            <person name="Kurita K."/>
            <person name="Lapidus A."/>
            <person name="Lardinois S."/>
            <person name="Lauber J."/>
            <person name="Lazarevic V."/>
            <person name="Lee S.-M."/>
            <person name="Levine A."/>
            <person name="Liu H."/>
            <person name="Masuda S."/>
            <person name="Mauel C."/>
            <person name="Medigue C."/>
            <person name="Medina N."/>
            <person name="Mellado R.P."/>
            <person name="Mizuno M."/>
            <person name="Moestl D."/>
            <person name="Nakai S."/>
            <person name="Noback M."/>
            <person name="Noone D."/>
            <person name="O'Reilly M."/>
            <person name="Ogawa K."/>
            <person name="Ogiwara A."/>
            <person name="Oudega B."/>
            <person name="Park S.-H."/>
            <person name="Parro V."/>
            <person name="Pohl T.M."/>
            <person name="Portetelle D."/>
            <person name="Porwollik S."/>
            <person name="Prescott A.M."/>
            <person name="Presecan E."/>
            <person name="Pujic P."/>
            <person name="Purnelle B."/>
            <person name="Rapoport G."/>
            <person name="Rey M."/>
            <person name="Reynolds S."/>
            <person name="Rieger M."/>
            <person name="Rivolta C."/>
            <person name="Rocha E."/>
            <person name="Roche B."/>
            <person name="Rose M."/>
            <person name="Sadaie Y."/>
            <person name="Sato T."/>
            <person name="Scanlan E."/>
            <person name="Schleich S."/>
            <person name="Schroeter R."/>
            <person name="Scoffone F."/>
            <person name="Sekiguchi J."/>
            <person name="Sekowska A."/>
            <person name="Seror S.J."/>
            <person name="Serror P."/>
            <person name="Shin B.-S."/>
            <person name="Soldo B."/>
            <person name="Sorokin A."/>
            <person name="Tacconi E."/>
            <person name="Takagi T."/>
            <person name="Takahashi H."/>
            <person name="Takemaru K."/>
            <person name="Takeuchi M."/>
            <person name="Tamakoshi A."/>
            <person name="Tanaka T."/>
            <person name="Terpstra P."/>
            <person name="Tognoni A."/>
            <person name="Tosato V."/>
            <person name="Uchiyama S."/>
            <person name="Vandenbol M."/>
            <person name="Vannier F."/>
            <person name="Vassarotti A."/>
            <person name="Viari A."/>
            <person name="Wambutt R."/>
            <person name="Wedler E."/>
            <person name="Wedler H."/>
            <person name="Weitzenegger T."/>
            <person name="Winters P."/>
            <person name="Wipat A."/>
            <person name="Yamamoto H."/>
            <person name="Yamane K."/>
            <person name="Yasumoto K."/>
            <person name="Yata K."/>
            <person name="Yoshida K."/>
            <person name="Yoshikawa H.-F."/>
            <person name="Zumstein E."/>
            <person name="Yoshikawa H."/>
            <person name="Danchin A."/>
        </authorList>
    </citation>
    <scope>NUCLEOTIDE SEQUENCE [LARGE SCALE GENOMIC DNA]</scope>
    <source>
        <strain>168</strain>
    </source>
</reference>
<reference key="3">
    <citation type="journal article" date="2003" name="J. Biol. Chem.">
        <title>Guanine nucleotides guanosine 5'-diphosphate 3'-diphosphate and GTP co-operatively regulate the production of an antibiotic bacilysin in Bacillus subtilis.</title>
        <authorList>
            <person name="Inaoka T."/>
            <person name="Takahashi K."/>
            <person name="Ohnishi-Kameyama M."/>
            <person name="Yoshida M."/>
            <person name="Ochi K."/>
        </authorList>
    </citation>
    <scope>INDUCTION</scope>
    <scope>PATHWAY</scope>
    <source>
        <strain>168 / 61884</strain>
    </source>
</reference>
<reference key="4">
    <citation type="journal article" date="2010" name="Biochemistry">
        <title>Investigation of anticapsin biosynthesis reveals a four-enzyme pathway to tetrahydrotyrosine in Bacillus subtilis.</title>
        <authorList>
            <person name="Mahlstedt S.A."/>
            <person name="Walsh C.T."/>
        </authorList>
    </citation>
    <scope>FUNCTION</scope>
    <scope>CATALYTIC ACTIVITY</scope>
    <scope>PATHWAY</scope>
</reference>
<reference key="5">
    <citation type="journal article" date="2012" name="Biochemistry">
        <title>Stereochemical outcome at four stereogenic centers during conversion of prephenate to tetrahydrotyrosine by BacABGF in the bacilysin pathway.</title>
        <authorList>
            <person name="Parker J.B."/>
            <person name="Walsh C.T."/>
        </authorList>
    </citation>
    <scope>FUNCTION</scope>
    <scope>CATALYTIC ACTIVITY</scope>
    <scope>BIOPHYSICOCHEMICAL PROPERTIES</scope>
    <scope>PATHWAY</scope>
</reference>
<reference key="6">
    <citation type="journal article" date="2013" name="Acta Crystallogr. D">
        <title>Structural insights into the role of Bacillus subtilis YwfH (BacG) in tetrahydrotyrosine synthesis.</title>
        <authorList>
            <person name="Rajavel M."/>
            <person name="Perinbam K."/>
            <person name="Gopal B."/>
        </authorList>
    </citation>
    <scope>X-RAY CRYSTALLOGRAPHY (1.75 ANGSTROMS) IN COMPLEX WITH NADP</scope>
    <scope>FUNCTION</scope>
    <scope>CATALYTIC ACTIVITY</scope>
    <scope>BIOPHYSICOCHEMICAL PROPERTIES</scope>
    <scope>MUTAGENESIS OF LYS-113; TYR-117; SER-155; ASN-158 AND SER-250</scope>
    <scope>SUBUNIT</scope>
    <scope>SUBSTRATE SPECIFICITY</scope>
</reference>
<proteinExistence type="evidence at protein level"/>
<dbReference type="EC" id="1.3.1.-" evidence="2 3 4"/>
<dbReference type="EMBL" id="X73124">
    <property type="protein sequence ID" value="CAA51642.1"/>
    <property type="molecule type" value="Genomic_DNA"/>
</dbReference>
<dbReference type="EMBL" id="AL009126">
    <property type="protein sequence ID" value="CAB15795.1"/>
    <property type="molecule type" value="Genomic_DNA"/>
</dbReference>
<dbReference type="PIR" id="S39741">
    <property type="entry name" value="S39741"/>
</dbReference>
<dbReference type="RefSeq" id="NP_391648.1">
    <property type="nucleotide sequence ID" value="NC_000964.3"/>
</dbReference>
<dbReference type="RefSeq" id="WP_003244095.1">
    <property type="nucleotide sequence ID" value="NZ_OZ025638.1"/>
</dbReference>
<dbReference type="PDB" id="3U49">
    <property type="method" value="X-ray"/>
    <property type="resolution" value="1.75 A"/>
    <property type="chains" value="A/B/C/D=1-259"/>
</dbReference>
<dbReference type="PDB" id="3U4C">
    <property type="method" value="X-ray"/>
    <property type="resolution" value="2.03 A"/>
    <property type="chains" value="A=1-259"/>
</dbReference>
<dbReference type="PDB" id="3U4D">
    <property type="method" value="X-ray"/>
    <property type="resolution" value="2.70 A"/>
    <property type="chains" value="A=1-259"/>
</dbReference>
<dbReference type="PDBsum" id="3U49"/>
<dbReference type="PDBsum" id="3U4C"/>
<dbReference type="PDBsum" id="3U4D"/>
<dbReference type="SMR" id="P39644"/>
<dbReference type="FunCoup" id="P39644">
    <property type="interactions" value="20"/>
</dbReference>
<dbReference type="STRING" id="224308.BSU37680"/>
<dbReference type="PaxDb" id="224308-BSU37680"/>
<dbReference type="EnsemblBacteria" id="CAB15795">
    <property type="protein sequence ID" value="CAB15795"/>
    <property type="gene ID" value="BSU_37680"/>
</dbReference>
<dbReference type="GeneID" id="937215"/>
<dbReference type="KEGG" id="bsu:BSU37680"/>
<dbReference type="PATRIC" id="fig|224308.179.peg.4080"/>
<dbReference type="eggNOG" id="COG1028">
    <property type="taxonomic scope" value="Bacteria"/>
</dbReference>
<dbReference type="InParanoid" id="P39644"/>
<dbReference type="OrthoDB" id="9803333at2"/>
<dbReference type="PhylomeDB" id="P39644"/>
<dbReference type="BioCyc" id="BSUB:BSU37680-MONOMER"/>
<dbReference type="BioCyc" id="MetaCyc:MONOMER-19125"/>
<dbReference type="BRENDA" id="1.3.1.B7">
    <property type="organism ID" value="658"/>
</dbReference>
<dbReference type="UniPathway" id="UPA00100"/>
<dbReference type="EvolutionaryTrace" id="P39644"/>
<dbReference type="Proteomes" id="UP000001570">
    <property type="component" value="Chromosome"/>
</dbReference>
<dbReference type="GO" id="GO:0005737">
    <property type="term" value="C:cytoplasm"/>
    <property type="evidence" value="ECO:0007669"/>
    <property type="project" value="UniProtKB-SubCell"/>
</dbReference>
<dbReference type="GO" id="GO:0050661">
    <property type="term" value="F:NADP binding"/>
    <property type="evidence" value="ECO:0000314"/>
    <property type="project" value="UniProtKB"/>
</dbReference>
<dbReference type="GO" id="GO:0016628">
    <property type="term" value="F:oxidoreductase activity, acting on the CH-CH group of donors, NAD or NADP as acceptor"/>
    <property type="evidence" value="ECO:0000314"/>
    <property type="project" value="UniProtKB"/>
</dbReference>
<dbReference type="GO" id="GO:0017000">
    <property type="term" value="P:antibiotic biosynthetic process"/>
    <property type="evidence" value="ECO:0000314"/>
    <property type="project" value="UniProtKB"/>
</dbReference>
<dbReference type="CDD" id="cd05344">
    <property type="entry name" value="BKR_like_SDR_like"/>
    <property type="match status" value="1"/>
</dbReference>
<dbReference type="Gene3D" id="3.40.50.720">
    <property type="entry name" value="NAD(P)-binding Rossmann-like Domain"/>
    <property type="match status" value="1"/>
</dbReference>
<dbReference type="InterPro" id="IPR036291">
    <property type="entry name" value="NAD(P)-bd_dom_sf"/>
</dbReference>
<dbReference type="InterPro" id="IPR050259">
    <property type="entry name" value="SDR"/>
</dbReference>
<dbReference type="InterPro" id="IPR002347">
    <property type="entry name" value="SDR_fam"/>
</dbReference>
<dbReference type="PANTHER" id="PTHR42879">
    <property type="entry name" value="3-OXOACYL-(ACYL-CARRIER-PROTEIN) REDUCTASE"/>
    <property type="match status" value="1"/>
</dbReference>
<dbReference type="PANTHER" id="PTHR42879:SF6">
    <property type="entry name" value="NADPH-DEPENDENT REDUCTASE BACG"/>
    <property type="match status" value="1"/>
</dbReference>
<dbReference type="Pfam" id="PF13561">
    <property type="entry name" value="adh_short_C2"/>
    <property type="match status" value="1"/>
</dbReference>
<dbReference type="PRINTS" id="PR00081">
    <property type="entry name" value="GDHRDH"/>
</dbReference>
<dbReference type="SUPFAM" id="SSF51735">
    <property type="entry name" value="NAD(P)-binding Rossmann-fold domains"/>
    <property type="match status" value="1"/>
</dbReference>
<gene>
    <name evidence="6" type="primary">bacG</name>
    <name evidence="5" type="synonym">ywfH</name>
    <name type="ordered locus">BSU37680</name>
    <name type="ORF">ipa-86r</name>
</gene>
<feature type="chain" id="PRO_0000054851" description="NADPH-dependent reductase BacG">
    <location>
        <begin position="1"/>
        <end position="259"/>
    </location>
</feature>
<feature type="binding site" evidence="4">
    <location>
        <begin position="12"/>
        <end position="15"/>
    </location>
    <ligand>
        <name>NADP(+)</name>
        <dbReference type="ChEBI" id="CHEBI:58349"/>
    </ligand>
</feature>
<feature type="binding site" evidence="4">
    <location>
        <begin position="34"/>
        <end position="36"/>
    </location>
    <ligand>
        <name>NADP(+)</name>
        <dbReference type="ChEBI" id="CHEBI:58349"/>
    </ligand>
</feature>
<feature type="binding site" evidence="4">
    <location>
        <begin position="62"/>
        <end position="63"/>
    </location>
    <ligand>
        <name>NADP(+)</name>
        <dbReference type="ChEBI" id="CHEBI:58349"/>
    </ligand>
</feature>
<feature type="binding site" evidence="4">
    <location>
        <position position="90"/>
    </location>
    <ligand>
        <name>NADP(+)</name>
        <dbReference type="ChEBI" id="CHEBI:58349"/>
    </ligand>
</feature>
<feature type="binding site" evidence="4">
    <location>
        <position position="113"/>
    </location>
    <ligand>
        <name>NADP(+)</name>
        <dbReference type="ChEBI" id="CHEBI:58349"/>
    </ligand>
</feature>
<feature type="binding site" evidence="4">
    <location>
        <begin position="185"/>
        <end position="191"/>
    </location>
    <ligand>
        <name>NADP(+)</name>
        <dbReference type="ChEBI" id="CHEBI:58349"/>
    </ligand>
</feature>
<feature type="mutagenesis site" description="5- and 2-fold decrease of the catalytic efficiency and the affinity for ex-H2HPP, respectively." evidence="4">
    <original>K</original>
    <variation>A</variation>
    <location>
        <position position="113"/>
    </location>
</feature>
<feature type="mutagenesis site" description="6- and 3-fold decrease of the catalytic efficiency and the affinity for ex-H2HPP, respectively." evidence="4">
    <original>Y</original>
    <variation>A</variation>
    <location>
        <position position="117"/>
    </location>
</feature>
<feature type="mutagenesis site" description="5.5- and 3-fold decrease of the catalytic efficiency and the affinity for ex-H2HPP, respectively." evidence="4">
    <original>S</original>
    <variation>A</variation>
    <location>
        <position position="155"/>
    </location>
</feature>
<feature type="mutagenesis site" description="5- and 2-fold decrease of the catalytic efficiency and the affinity for ex-H2HPP, respectively." evidence="4">
    <original>N</original>
    <variation>A</variation>
    <location>
        <position position="158"/>
    </location>
</feature>
<feature type="mutagenesis site" description="1.5- and 2-fold decrease of the catalytic efficiency and the affinity for ex-H2HPP, respectively." evidence="4">
    <original>S</original>
    <variation>A</variation>
    <location>
        <position position="250"/>
    </location>
</feature>
<feature type="strand" evidence="10">
    <location>
        <begin position="5"/>
        <end position="10"/>
    </location>
</feature>
<feature type="helix" evidence="10">
    <location>
        <begin position="14"/>
        <end position="25"/>
    </location>
</feature>
<feature type="strand" evidence="10">
    <location>
        <begin position="29"/>
        <end position="32"/>
    </location>
</feature>
<feature type="helix" evidence="10">
    <location>
        <begin position="37"/>
        <end position="50"/>
    </location>
</feature>
<feature type="strand" evidence="10">
    <location>
        <begin position="56"/>
        <end position="58"/>
    </location>
</feature>
<feature type="helix" evidence="10">
    <location>
        <begin position="66"/>
        <end position="80"/>
    </location>
</feature>
<feature type="strand" evidence="10">
    <location>
        <begin position="85"/>
        <end position="88"/>
    </location>
</feature>
<feature type="turn" evidence="10">
    <location>
        <begin position="98"/>
        <end position="100"/>
    </location>
</feature>
<feature type="helix" evidence="10">
    <location>
        <begin position="103"/>
        <end position="112"/>
    </location>
</feature>
<feature type="helix" evidence="10">
    <location>
        <begin position="114"/>
        <end position="129"/>
    </location>
</feature>
<feature type="turn" evidence="10">
    <location>
        <begin position="130"/>
        <end position="132"/>
    </location>
</feature>
<feature type="strand" evidence="10">
    <location>
        <begin position="134"/>
        <end position="139"/>
    </location>
</feature>
<feature type="strand" evidence="10">
    <location>
        <begin position="144"/>
        <end position="146"/>
    </location>
</feature>
<feature type="helix" evidence="10">
    <location>
        <begin position="147"/>
        <end position="150"/>
    </location>
</feature>
<feature type="helix" evidence="10">
    <location>
        <begin position="152"/>
        <end position="172"/>
    </location>
</feature>
<feature type="helix" evidence="10">
    <location>
        <begin position="173"/>
        <end position="175"/>
    </location>
</feature>
<feature type="strand" evidence="10">
    <location>
        <begin position="177"/>
        <end position="183"/>
    </location>
</feature>
<feature type="helix" evidence="10">
    <location>
        <begin position="191"/>
        <end position="205"/>
    </location>
</feature>
<feature type="helix" evidence="11">
    <location>
        <begin position="210"/>
        <end position="216"/>
    </location>
</feature>
<feature type="helix" evidence="10">
    <location>
        <begin position="226"/>
        <end position="237"/>
    </location>
</feature>
<feature type="helix" evidence="10">
    <location>
        <begin position="239"/>
        <end position="241"/>
    </location>
</feature>
<feature type="strand" evidence="10">
    <location>
        <begin position="248"/>
        <end position="250"/>
    </location>
</feature>
<name>BACG_BACSU</name>
<accession>P39644</accession>
<keyword id="KW-0002">3D-structure</keyword>
<keyword id="KW-0045">Antibiotic biosynthesis</keyword>
<keyword id="KW-0963">Cytoplasm</keyword>
<keyword id="KW-0521">NADP</keyword>
<keyword id="KW-0560">Oxidoreductase</keyword>
<keyword id="KW-1185">Reference proteome</keyword>
<comment type="function">
    <text evidence="2 3 4">Along with the bacABCDEF operon, BacG is involved in the biosynthesis of the nonribosomally synthesized dipeptide antibiotic bacilysin, composed of L-alanine and L-anticapsin. Bacilysin is an irreversible inactivator of the glutaminase domain of glucosamine synthetase (PubMed:20052993). BacG catalyzes the stereoselective reduction of exocyclic-delta(3),delta(5)-dihydro-hydroxyphenylpyruvate (ex-H2HPP), adding a pro-S hydride equivalent to C4 position to yield tetrahydro-hydroxyphenylpyruvate (H4HPP) (PubMed:22765234, PubMed:23519407). Although the 3Z,7R-ex-H2HPP isomer is kinetically disfavored by BacB and produced in a smaller quantity than 3E,7R-ex-H2HPP, it is the preferred substrate for the conjugate reduction reaction of BacG (PubMed:22765234, PubMed:23519407).</text>
</comment>
<comment type="biophysicochemical properties">
    <kinetics>
        <KM evidence="3">90 uM for 3E,7R-ex-H2HPP</KM>
        <KM evidence="4">178 uM for ex-H2HPP</KM>
        <KM evidence="3">2700 uM for 3Z,7R-ex-H2HPP</KM>
        <Vmax evidence="4">92.82 nmol/sec/ug enzyme</Vmax>
        <text evidence="4">kcat is 71.3 min(-1) for reductase activity with 3Z,7R-ex-H2HPP as substrate. kcat is 33.2 min(-1) for reductase activity with 3E,7R-ex-H2HPP as substrate. kcat is 34.38 sec(-1) for reductase activity with ex-H2HPP as substrate.</text>
    </kinetics>
</comment>
<comment type="pathway">
    <text evidence="3 8 9">Antibiotic biosynthesis; bacilysin biosynthesis.</text>
</comment>
<comment type="subunit">
    <text evidence="4">Homodimer.</text>
</comment>
<comment type="subcellular location">
    <subcellularLocation>
        <location evidence="7">Cytoplasm</location>
    </subcellularLocation>
</comment>
<comment type="induction">
    <text evidence="1">The compound guanosine 5'-diphosphate 3'-diphosphate (ppGpp) is essential for the transcription of the bacABCDEF operon and BacG, and GTP regulates the transcription of both this operon and ywfH via the CodY-mediated regulation system.</text>
</comment>
<comment type="similarity">
    <text evidence="7">Belongs to the short-chain dehydrogenases/reductases (SDR) family.</text>
</comment>
<sequence length="259" mass="28022">MSKRTAFVMGASQGIGKAIALKLADQHFSLVINSRNLDNIESVKEDILAKHPEASVIVLAGDMSDQHTRAGIFQKIESQCGRLDVLINNIPGGAPDTFDNCNIEDMTATFTQKTVAYIDAIKRASSLMKQNEFGRIINIVGNLWKEPGANMFTNSMMNAALINASKNISIQLAPHNITVNCLNPGFIATDRYHQFVENVMKKNSISKQKAEEQIASGIPMKRVGSAEETAALAAFLASEEASYITGQQISADGGSMKSI</sequence>
<organism>
    <name type="scientific">Bacillus subtilis (strain 168)</name>
    <dbReference type="NCBI Taxonomy" id="224308"/>
    <lineage>
        <taxon>Bacteria</taxon>
        <taxon>Bacillati</taxon>
        <taxon>Bacillota</taxon>
        <taxon>Bacilli</taxon>
        <taxon>Bacillales</taxon>
        <taxon>Bacillaceae</taxon>
        <taxon>Bacillus</taxon>
    </lineage>
</organism>
<protein>
    <recommendedName>
        <fullName evidence="7">NADPH-dependent reductase BacG</fullName>
        <ecNumber evidence="2 3 4">1.3.1.-</ecNumber>
    </recommendedName>
    <alternativeName>
        <fullName>Bacilysin biosynthesis oxidoreductase YwfH</fullName>
    </alternativeName>
    <alternativeName>
        <fullName evidence="7">H2HPP reductase</fullName>
    </alternativeName>
</protein>